<organism>
    <name type="scientific">Xylella fastidiosa (strain Temecula1 / ATCC 700964)</name>
    <dbReference type="NCBI Taxonomy" id="183190"/>
    <lineage>
        <taxon>Bacteria</taxon>
        <taxon>Pseudomonadati</taxon>
        <taxon>Pseudomonadota</taxon>
        <taxon>Gammaproteobacteria</taxon>
        <taxon>Lysobacterales</taxon>
        <taxon>Lysobacteraceae</taxon>
        <taxon>Xylella</taxon>
    </lineage>
</organism>
<sequence>MSDSPRRFPTPLLLTGVMGVLILIALLTFTLMRSWDNASDQSALLGKPAPNFSLPLLHDPSLQISNTDLAGAPYLLHVWGSWCAACATEQPVLTHFALSKRVRVIGYNWKDRREDALQWLEQLGNPYLAVVSDPEGKTAIDWGVTAAPTTFLIDGRGIVRWHHKGALNQQMIEHKLLPILADIEHSPTAAPALHQAP</sequence>
<reference key="1">
    <citation type="journal article" date="2003" name="J. Bacteriol.">
        <title>Comparative analyses of the complete genome sequences of Pierce's disease and citrus variegated chlorosis strains of Xylella fastidiosa.</title>
        <authorList>
            <person name="Van Sluys M.A."/>
            <person name="de Oliveira M.C."/>
            <person name="Monteiro-Vitorello C.B."/>
            <person name="Miyaki C.Y."/>
            <person name="Furlan L.R."/>
            <person name="Camargo L.E.A."/>
            <person name="da Silva A.C.R."/>
            <person name="Moon D.H."/>
            <person name="Takita M.A."/>
            <person name="Lemos E.G.M."/>
            <person name="Machado M.A."/>
            <person name="Ferro M.I.T."/>
            <person name="da Silva F.R."/>
            <person name="Goldman M.H.S."/>
            <person name="Goldman G.H."/>
            <person name="Lemos M.V.F."/>
            <person name="El-Dorry H."/>
            <person name="Tsai S.M."/>
            <person name="Carrer H."/>
            <person name="Carraro D.M."/>
            <person name="de Oliveira R.C."/>
            <person name="Nunes L.R."/>
            <person name="Siqueira W.J."/>
            <person name="Coutinho L.L."/>
            <person name="Kimura E.T."/>
            <person name="Ferro E.S."/>
            <person name="Harakava R."/>
            <person name="Kuramae E.E."/>
            <person name="Marino C.L."/>
            <person name="Giglioti E."/>
            <person name="Abreu I.L."/>
            <person name="Alves L.M.C."/>
            <person name="do Amaral A.M."/>
            <person name="Baia G.S."/>
            <person name="Blanco S.R."/>
            <person name="Brito M.S."/>
            <person name="Cannavan F.S."/>
            <person name="Celestino A.V."/>
            <person name="da Cunha A.F."/>
            <person name="Fenille R.C."/>
            <person name="Ferro J.A."/>
            <person name="Formighieri E.F."/>
            <person name="Kishi L.T."/>
            <person name="Leoni S.G."/>
            <person name="Oliveira A.R."/>
            <person name="Rosa V.E. Jr."/>
            <person name="Sassaki F.T."/>
            <person name="Sena J.A.D."/>
            <person name="de Souza A.A."/>
            <person name="Truffi D."/>
            <person name="Tsukumo F."/>
            <person name="Yanai G.M."/>
            <person name="Zaros L.G."/>
            <person name="Civerolo E.L."/>
            <person name="Simpson A.J.G."/>
            <person name="Almeida N.F. Jr."/>
            <person name="Setubal J.C."/>
            <person name="Kitajima J.P."/>
        </authorList>
    </citation>
    <scope>NUCLEOTIDE SEQUENCE [LARGE SCALE GENOMIC DNA]</scope>
    <source>
        <strain>Temecula1 / ATCC 700964</strain>
    </source>
</reference>
<feature type="chain" id="PRO_0000201305" description="Thiol:disulfide interchange protein DsbE">
    <location>
        <begin position="1"/>
        <end position="197"/>
    </location>
</feature>
<feature type="topological domain" description="Cytoplasmic" evidence="2">
    <location>
        <begin position="1"/>
        <end position="11"/>
    </location>
</feature>
<feature type="transmembrane region" description="Helical" evidence="2">
    <location>
        <begin position="12"/>
        <end position="32"/>
    </location>
</feature>
<feature type="topological domain" description="Periplasmic" evidence="2">
    <location>
        <begin position="33"/>
        <end position="197"/>
    </location>
</feature>
<feature type="domain" description="Thioredoxin" evidence="3">
    <location>
        <begin position="43"/>
        <end position="181"/>
    </location>
</feature>
<feature type="disulfide bond" description="Redox-active" evidence="3">
    <location>
        <begin position="83"/>
        <end position="86"/>
    </location>
</feature>
<comment type="function">
    <text evidence="1">Involved in disulfide bond formation. Catalyzes a late, reductive step in the assembly of periplasmic c-type cytochromes, probably the reduction of disulfide bonds of the apocytochrome c to allow covalent linkage with the heme. Possible subunit of a heme lyase (By similarity).</text>
</comment>
<comment type="subcellular location">
    <subcellularLocation>
        <location evidence="1">Cell inner membrane</location>
        <topology evidence="1">Single-pass membrane protein</topology>
        <orientation evidence="1">Periplasmic side</orientation>
    </subcellularLocation>
</comment>
<comment type="similarity">
    <text evidence="4">Belongs to the thioredoxin family. DsbE subfamily.</text>
</comment>
<keyword id="KW-0997">Cell inner membrane</keyword>
<keyword id="KW-1003">Cell membrane</keyword>
<keyword id="KW-0201">Cytochrome c-type biogenesis</keyword>
<keyword id="KW-1015">Disulfide bond</keyword>
<keyword id="KW-0472">Membrane</keyword>
<keyword id="KW-0676">Redox-active center</keyword>
<keyword id="KW-1185">Reference proteome</keyword>
<keyword id="KW-0812">Transmembrane</keyword>
<keyword id="KW-1133">Transmembrane helix</keyword>
<accession>Q87BH3</accession>
<name>DSBE_XYLFT</name>
<evidence type="ECO:0000250" key="1"/>
<evidence type="ECO:0000255" key="2"/>
<evidence type="ECO:0000255" key="3">
    <source>
        <dbReference type="PROSITE-ProRule" id="PRU00691"/>
    </source>
</evidence>
<evidence type="ECO:0000305" key="4"/>
<protein>
    <recommendedName>
        <fullName>Thiol:disulfide interchange protein DsbE</fullName>
    </recommendedName>
    <alternativeName>
        <fullName>Cytochrome c biogenesis protein CcmG</fullName>
    </alternativeName>
</protein>
<dbReference type="EMBL" id="AE009442">
    <property type="protein sequence ID" value="AAO29324.1"/>
    <property type="molecule type" value="Genomic_DNA"/>
</dbReference>
<dbReference type="RefSeq" id="WP_004088487.1">
    <property type="nucleotide sequence ID" value="NC_004556.1"/>
</dbReference>
<dbReference type="SMR" id="Q87BH3"/>
<dbReference type="KEGG" id="xft:PD_1480"/>
<dbReference type="HOGENOM" id="CLU_042529_19_1_6"/>
<dbReference type="Proteomes" id="UP000002516">
    <property type="component" value="Chromosome"/>
</dbReference>
<dbReference type="GO" id="GO:0030288">
    <property type="term" value="C:outer membrane-bounded periplasmic space"/>
    <property type="evidence" value="ECO:0007669"/>
    <property type="project" value="InterPro"/>
</dbReference>
<dbReference type="GO" id="GO:0005886">
    <property type="term" value="C:plasma membrane"/>
    <property type="evidence" value="ECO:0007669"/>
    <property type="project" value="UniProtKB-SubCell"/>
</dbReference>
<dbReference type="GO" id="GO:0015036">
    <property type="term" value="F:disulfide oxidoreductase activity"/>
    <property type="evidence" value="ECO:0007669"/>
    <property type="project" value="InterPro"/>
</dbReference>
<dbReference type="GO" id="GO:0017004">
    <property type="term" value="P:cytochrome complex assembly"/>
    <property type="evidence" value="ECO:0007669"/>
    <property type="project" value="UniProtKB-KW"/>
</dbReference>
<dbReference type="CDD" id="cd03010">
    <property type="entry name" value="TlpA_like_DsbE"/>
    <property type="match status" value="1"/>
</dbReference>
<dbReference type="Gene3D" id="3.40.30.10">
    <property type="entry name" value="Glutaredoxin"/>
    <property type="match status" value="1"/>
</dbReference>
<dbReference type="InterPro" id="IPR004799">
    <property type="entry name" value="Periplasmic_diS_OxRdtase_DsbE"/>
</dbReference>
<dbReference type="InterPro" id="IPR013740">
    <property type="entry name" value="Redoxin"/>
</dbReference>
<dbReference type="InterPro" id="IPR036249">
    <property type="entry name" value="Thioredoxin-like_sf"/>
</dbReference>
<dbReference type="InterPro" id="IPR017937">
    <property type="entry name" value="Thioredoxin_CS"/>
</dbReference>
<dbReference type="InterPro" id="IPR013766">
    <property type="entry name" value="Thioredoxin_domain"/>
</dbReference>
<dbReference type="InterPro" id="IPR050553">
    <property type="entry name" value="Thioredoxin_ResA/DsbE_sf"/>
</dbReference>
<dbReference type="NCBIfam" id="TIGR00385">
    <property type="entry name" value="dsbE"/>
    <property type="match status" value="1"/>
</dbReference>
<dbReference type="PANTHER" id="PTHR42852">
    <property type="entry name" value="THIOL:DISULFIDE INTERCHANGE PROTEIN DSBE"/>
    <property type="match status" value="1"/>
</dbReference>
<dbReference type="PANTHER" id="PTHR42852:SF6">
    <property type="entry name" value="THIOL:DISULFIDE INTERCHANGE PROTEIN DSBE"/>
    <property type="match status" value="1"/>
</dbReference>
<dbReference type="Pfam" id="PF08534">
    <property type="entry name" value="Redoxin"/>
    <property type="match status" value="1"/>
</dbReference>
<dbReference type="SUPFAM" id="SSF52833">
    <property type="entry name" value="Thioredoxin-like"/>
    <property type="match status" value="1"/>
</dbReference>
<dbReference type="PROSITE" id="PS00194">
    <property type="entry name" value="THIOREDOXIN_1"/>
    <property type="match status" value="1"/>
</dbReference>
<dbReference type="PROSITE" id="PS51352">
    <property type="entry name" value="THIOREDOXIN_2"/>
    <property type="match status" value="1"/>
</dbReference>
<proteinExistence type="inferred from homology"/>
<gene>
    <name type="primary">dsbE</name>
    <name type="synonym">ccmG</name>
    <name type="ordered locus">PD_1480</name>
</gene>